<protein>
    <recommendedName>
        <fullName evidence="1">tRNA-cytidine(32) 2-sulfurtransferase 1</fullName>
        <ecNumber evidence="1">2.8.1.-</ecNumber>
    </recommendedName>
    <alternativeName>
        <fullName evidence="1">Two-thiocytidine biosynthesis protein A 1</fullName>
    </alternativeName>
    <alternativeName>
        <fullName evidence="1">tRNA 2-thiocytidine biosynthesis protein TtcA 1</fullName>
    </alternativeName>
</protein>
<organism>
    <name type="scientific">Francisella tularensis subsp. tularensis (strain WY96-3418)</name>
    <dbReference type="NCBI Taxonomy" id="418136"/>
    <lineage>
        <taxon>Bacteria</taxon>
        <taxon>Pseudomonadati</taxon>
        <taxon>Pseudomonadota</taxon>
        <taxon>Gammaproteobacteria</taxon>
        <taxon>Thiotrichales</taxon>
        <taxon>Francisellaceae</taxon>
        <taxon>Francisella</taxon>
    </lineage>
</organism>
<gene>
    <name evidence="1" type="primary">ttcA1</name>
    <name type="ordered locus">FTW_0951</name>
</gene>
<keyword id="KW-0004">4Fe-4S</keyword>
<keyword id="KW-0067">ATP-binding</keyword>
<keyword id="KW-0963">Cytoplasm</keyword>
<keyword id="KW-0408">Iron</keyword>
<keyword id="KW-0411">Iron-sulfur</keyword>
<keyword id="KW-0460">Magnesium</keyword>
<keyword id="KW-0479">Metal-binding</keyword>
<keyword id="KW-0547">Nucleotide-binding</keyword>
<keyword id="KW-0694">RNA-binding</keyword>
<keyword id="KW-0808">Transferase</keyword>
<keyword id="KW-0819">tRNA processing</keyword>
<keyword id="KW-0820">tRNA-binding</keyword>
<sequence>MTNNTDKQTLKKLERQILRKTAQAINQYNMIEDGDKIMVCLSGGKDSYCLLEMLLLLQKKAPISFEIIAVNLDQKQPGFPEEVLPNYLKNKGVEFHIIERDTYSIVKRVIPEGKTTCGLCSRMRRGILYDFAEENNVTKVALGHHRDDIIETFFLNLFYNGSIKAMPAKLLSDDKRNIVIRPLAFVSEKETLEYSQLKEFPIIPCNLCGSQDNLQRVFIKDMLNRWEQNNPERKNVIFKALSNISPSQMLDKELFDFINISKDDIQR</sequence>
<evidence type="ECO:0000255" key="1">
    <source>
        <dbReference type="HAMAP-Rule" id="MF_01850"/>
    </source>
</evidence>
<accession>A4IXY7</accession>
<comment type="function">
    <text evidence="1">Catalyzes the ATP-dependent 2-thiolation of cytidine in position 32 of tRNA, to form 2-thiocytidine (s(2)C32). The sulfur atoms are provided by the cysteine/cysteine desulfurase (IscS) system.</text>
</comment>
<comment type="catalytic activity">
    <reaction evidence="1">
        <text>cytidine(32) in tRNA + S-sulfanyl-L-cysteinyl-[cysteine desulfurase] + AH2 + ATP = 2-thiocytidine(32) in tRNA + L-cysteinyl-[cysteine desulfurase] + A + AMP + diphosphate + H(+)</text>
        <dbReference type="Rhea" id="RHEA:57048"/>
        <dbReference type="Rhea" id="RHEA-COMP:10288"/>
        <dbReference type="Rhea" id="RHEA-COMP:12157"/>
        <dbReference type="Rhea" id="RHEA-COMP:12158"/>
        <dbReference type="Rhea" id="RHEA-COMP:14821"/>
        <dbReference type="ChEBI" id="CHEBI:13193"/>
        <dbReference type="ChEBI" id="CHEBI:15378"/>
        <dbReference type="ChEBI" id="CHEBI:17499"/>
        <dbReference type="ChEBI" id="CHEBI:29950"/>
        <dbReference type="ChEBI" id="CHEBI:30616"/>
        <dbReference type="ChEBI" id="CHEBI:33019"/>
        <dbReference type="ChEBI" id="CHEBI:61963"/>
        <dbReference type="ChEBI" id="CHEBI:82748"/>
        <dbReference type="ChEBI" id="CHEBI:141453"/>
        <dbReference type="ChEBI" id="CHEBI:456215"/>
    </reaction>
    <physiologicalReaction direction="left-to-right" evidence="1">
        <dbReference type="Rhea" id="RHEA:57049"/>
    </physiologicalReaction>
</comment>
<comment type="cofactor">
    <cofactor evidence="1">
        <name>Mg(2+)</name>
        <dbReference type="ChEBI" id="CHEBI:18420"/>
    </cofactor>
</comment>
<comment type="cofactor">
    <cofactor evidence="1">
        <name>[4Fe-4S] cluster</name>
        <dbReference type="ChEBI" id="CHEBI:49883"/>
    </cofactor>
    <text evidence="1">Binds 1 [4Fe-4S] cluster per subunit. The cluster is chelated by three Cys residues, the fourth Fe has a free coordination site that may bind a sulfur atom transferred from the persulfide of IscS.</text>
</comment>
<comment type="pathway">
    <text evidence="1">tRNA modification.</text>
</comment>
<comment type="subunit">
    <text evidence="1">Homodimer.</text>
</comment>
<comment type="subcellular location">
    <subcellularLocation>
        <location evidence="1">Cytoplasm</location>
    </subcellularLocation>
</comment>
<comment type="miscellaneous">
    <text evidence="1">The thiolation reaction likely consists of two steps: a first activation step by ATP to form an adenylated intermediate of the target base of tRNA, and a second nucleophilic substitution step of the sulfur (S) atom supplied by the hydrosulfide attached to the Fe-S cluster.</text>
</comment>
<comment type="similarity">
    <text evidence="1">Belongs to the TtcA family.</text>
</comment>
<proteinExistence type="inferred from homology"/>
<dbReference type="EC" id="2.8.1.-" evidence="1"/>
<dbReference type="EMBL" id="CP000608">
    <property type="protein sequence ID" value="ABO46788.1"/>
    <property type="molecule type" value="Genomic_DNA"/>
</dbReference>
<dbReference type="SMR" id="A4IXY7"/>
<dbReference type="KEGG" id="ftw:FTW_0951"/>
<dbReference type="HOGENOM" id="CLU_026481_0_0_6"/>
<dbReference type="GO" id="GO:0005737">
    <property type="term" value="C:cytoplasm"/>
    <property type="evidence" value="ECO:0007669"/>
    <property type="project" value="UniProtKB-SubCell"/>
</dbReference>
<dbReference type="GO" id="GO:0051539">
    <property type="term" value="F:4 iron, 4 sulfur cluster binding"/>
    <property type="evidence" value="ECO:0007669"/>
    <property type="project" value="UniProtKB-UniRule"/>
</dbReference>
<dbReference type="GO" id="GO:0005524">
    <property type="term" value="F:ATP binding"/>
    <property type="evidence" value="ECO:0007669"/>
    <property type="project" value="UniProtKB-UniRule"/>
</dbReference>
<dbReference type="GO" id="GO:0000287">
    <property type="term" value="F:magnesium ion binding"/>
    <property type="evidence" value="ECO:0007669"/>
    <property type="project" value="UniProtKB-UniRule"/>
</dbReference>
<dbReference type="GO" id="GO:0016783">
    <property type="term" value="F:sulfurtransferase activity"/>
    <property type="evidence" value="ECO:0007669"/>
    <property type="project" value="UniProtKB-UniRule"/>
</dbReference>
<dbReference type="GO" id="GO:0000049">
    <property type="term" value="F:tRNA binding"/>
    <property type="evidence" value="ECO:0007669"/>
    <property type="project" value="UniProtKB-KW"/>
</dbReference>
<dbReference type="GO" id="GO:0034227">
    <property type="term" value="P:tRNA thio-modification"/>
    <property type="evidence" value="ECO:0007669"/>
    <property type="project" value="UniProtKB-UniRule"/>
</dbReference>
<dbReference type="CDD" id="cd24138">
    <property type="entry name" value="TtcA-like"/>
    <property type="match status" value="1"/>
</dbReference>
<dbReference type="Gene3D" id="3.40.50.620">
    <property type="entry name" value="HUPs"/>
    <property type="match status" value="1"/>
</dbReference>
<dbReference type="HAMAP" id="MF_01850">
    <property type="entry name" value="TtcA"/>
    <property type="match status" value="1"/>
</dbReference>
<dbReference type="InterPro" id="IPR014729">
    <property type="entry name" value="Rossmann-like_a/b/a_fold"/>
</dbReference>
<dbReference type="InterPro" id="IPR011063">
    <property type="entry name" value="TilS/TtcA_N"/>
</dbReference>
<dbReference type="InterPro" id="IPR012089">
    <property type="entry name" value="tRNA_Cyd_32_2_STrfase"/>
</dbReference>
<dbReference type="InterPro" id="IPR035107">
    <property type="entry name" value="tRNA_thiolation_TtcA_Ctu1"/>
</dbReference>
<dbReference type="NCBIfam" id="NF007972">
    <property type="entry name" value="PRK10696.1"/>
    <property type="match status" value="1"/>
</dbReference>
<dbReference type="PANTHER" id="PTHR43686:SF1">
    <property type="entry name" value="AMINOTRAN_5 DOMAIN-CONTAINING PROTEIN"/>
    <property type="match status" value="1"/>
</dbReference>
<dbReference type="PANTHER" id="PTHR43686">
    <property type="entry name" value="SULFURTRANSFERASE-RELATED"/>
    <property type="match status" value="1"/>
</dbReference>
<dbReference type="Pfam" id="PF01171">
    <property type="entry name" value="ATP_bind_3"/>
    <property type="match status" value="1"/>
</dbReference>
<dbReference type="PIRSF" id="PIRSF004976">
    <property type="entry name" value="ATPase_YdaO"/>
    <property type="match status" value="1"/>
</dbReference>
<dbReference type="SUPFAM" id="SSF52402">
    <property type="entry name" value="Adenine nucleotide alpha hydrolases-like"/>
    <property type="match status" value="1"/>
</dbReference>
<name>TTCA1_FRATW</name>
<reference key="1">
    <citation type="journal article" date="2007" name="PLoS ONE">
        <title>Complete genomic characterization of a pathogenic A.II strain of Francisella tularensis subspecies tularensis.</title>
        <authorList>
            <person name="Beckstrom-Sternberg S.M."/>
            <person name="Auerbach R.K."/>
            <person name="Godbole S."/>
            <person name="Pearson J.V."/>
            <person name="Beckstrom-Sternberg J.S."/>
            <person name="Deng Z."/>
            <person name="Munk C."/>
            <person name="Kubota K."/>
            <person name="Zhou Y."/>
            <person name="Bruce D."/>
            <person name="Noronha J."/>
            <person name="Scheuermann R.H."/>
            <person name="Wang A."/>
            <person name="Wei X."/>
            <person name="Wang J."/>
            <person name="Hao J."/>
            <person name="Wagner D.M."/>
            <person name="Brettin T.S."/>
            <person name="Brown N."/>
            <person name="Gilna P."/>
            <person name="Keim P.S."/>
        </authorList>
    </citation>
    <scope>NUCLEOTIDE SEQUENCE [LARGE SCALE GENOMIC DNA]</scope>
    <source>
        <strain>WY96-3418</strain>
    </source>
</reference>
<feature type="chain" id="PRO_0000348742" description="tRNA-cytidine(32) 2-sulfurtransferase 1">
    <location>
        <begin position="1"/>
        <end position="267"/>
    </location>
</feature>
<feature type="short sequence motif" description="PP-loop motif" evidence="1">
    <location>
        <begin position="42"/>
        <end position="47"/>
    </location>
</feature>
<feature type="binding site" evidence="1">
    <location>
        <position position="117"/>
    </location>
    <ligand>
        <name>[4Fe-4S] cluster</name>
        <dbReference type="ChEBI" id="CHEBI:49883"/>
    </ligand>
</feature>
<feature type="binding site" evidence="1">
    <location>
        <position position="120"/>
    </location>
    <ligand>
        <name>[4Fe-4S] cluster</name>
        <dbReference type="ChEBI" id="CHEBI:49883"/>
    </ligand>
</feature>
<feature type="binding site" evidence="1">
    <location>
        <position position="208"/>
    </location>
    <ligand>
        <name>[4Fe-4S] cluster</name>
        <dbReference type="ChEBI" id="CHEBI:49883"/>
    </ligand>
</feature>